<accession>B7NDL9</accession>
<name>AAEA_ECOLU</name>
<gene>
    <name evidence="1" type="primary">aaeA</name>
    <name type="ordered locus">ECUMN_3715</name>
</gene>
<organism>
    <name type="scientific">Escherichia coli O17:K52:H18 (strain UMN026 / ExPEC)</name>
    <dbReference type="NCBI Taxonomy" id="585056"/>
    <lineage>
        <taxon>Bacteria</taxon>
        <taxon>Pseudomonadati</taxon>
        <taxon>Pseudomonadota</taxon>
        <taxon>Gammaproteobacteria</taxon>
        <taxon>Enterobacterales</taxon>
        <taxon>Enterobacteriaceae</taxon>
        <taxon>Escherichia</taxon>
    </lineage>
</organism>
<reference key="1">
    <citation type="journal article" date="2009" name="PLoS Genet.">
        <title>Organised genome dynamics in the Escherichia coli species results in highly diverse adaptive paths.</title>
        <authorList>
            <person name="Touchon M."/>
            <person name="Hoede C."/>
            <person name="Tenaillon O."/>
            <person name="Barbe V."/>
            <person name="Baeriswyl S."/>
            <person name="Bidet P."/>
            <person name="Bingen E."/>
            <person name="Bonacorsi S."/>
            <person name="Bouchier C."/>
            <person name="Bouvet O."/>
            <person name="Calteau A."/>
            <person name="Chiapello H."/>
            <person name="Clermont O."/>
            <person name="Cruveiller S."/>
            <person name="Danchin A."/>
            <person name="Diard M."/>
            <person name="Dossat C."/>
            <person name="Karoui M.E."/>
            <person name="Frapy E."/>
            <person name="Garry L."/>
            <person name="Ghigo J.M."/>
            <person name="Gilles A.M."/>
            <person name="Johnson J."/>
            <person name="Le Bouguenec C."/>
            <person name="Lescat M."/>
            <person name="Mangenot S."/>
            <person name="Martinez-Jehanne V."/>
            <person name="Matic I."/>
            <person name="Nassif X."/>
            <person name="Oztas S."/>
            <person name="Petit M.A."/>
            <person name="Pichon C."/>
            <person name="Rouy Z."/>
            <person name="Ruf C.S."/>
            <person name="Schneider D."/>
            <person name="Tourret J."/>
            <person name="Vacherie B."/>
            <person name="Vallenet D."/>
            <person name="Medigue C."/>
            <person name="Rocha E.P.C."/>
            <person name="Denamur E."/>
        </authorList>
    </citation>
    <scope>NUCLEOTIDE SEQUENCE [LARGE SCALE GENOMIC DNA]</scope>
    <source>
        <strain>UMN026 / ExPEC</strain>
    </source>
</reference>
<comment type="function">
    <text evidence="1">Forms an efflux pump with AaeB.</text>
</comment>
<comment type="subcellular location">
    <subcellularLocation>
        <location evidence="1">Cell inner membrane</location>
        <topology evidence="1">Single-pass membrane protein</topology>
    </subcellularLocation>
</comment>
<comment type="induction">
    <text evidence="1">Positively coregulated with aaeB and aaeX by AaeR.</text>
</comment>
<comment type="similarity">
    <text evidence="1">Belongs to the membrane fusion protein (MFP) (TC 8.A.1) family.</text>
</comment>
<sequence length="310" mass="34691">MKTLIRKFSRTAITVVLVILAFIAIFNAWVYYTESPWTRDARFSADVVAIAPDVSGLITQVNVHDNQLVKKGQVLFTIDQPRYQKALEEAQADVAYYQVLAQEKRQEAGRRNRLGVQAMSREEIDQANNVLQTVLHQLAKAQATRDLAKLDLERTVIRAPADGWVTNLNVYTGEFITRGSTAVALVKQNSFYVLAYMEETKLEGVRPGYRAEITPLGSNKVLKGTVDSVAAGVTNASSTSDDKGMATIDSNLEWVRLAQRVPVRIRLDNQQENIWPAGTTATVVVTGKQDRDESQDSFFRKMAHRLREFG</sequence>
<proteinExistence type="inferred from homology"/>
<evidence type="ECO:0000255" key="1">
    <source>
        <dbReference type="HAMAP-Rule" id="MF_01544"/>
    </source>
</evidence>
<feature type="chain" id="PRO_1000146716" description="p-hydroxybenzoic acid efflux pump subunit AaeA">
    <location>
        <begin position="1"/>
        <end position="310"/>
    </location>
</feature>
<feature type="transmembrane region" description="Helical" evidence="1">
    <location>
        <begin position="12"/>
        <end position="32"/>
    </location>
</feature>
<protein>
    <recommendedName>
        <fullName evidence="1">p-hydroxybenzoic acid efflux pump subunit AaeA</fullName>
        <shortName evidence="1">pHBA efflux pump protein A</shortName>
    </recommendedName>
</protein>
<keyword id="KW-0997">Cell inner membrane</keyword>
<keyword id="KW-1003">Cell membrane</keyword>
<keyword id="KW-0472">Membrane</keyword>
<keyword id="KW-0812">Transmembrane</keyword>
<keyword id="KW-1133">Transmembrane helix</keyword>
<keyword id="KW-0813">Transport</keyword>
<dbReference type="EMBL" id="CU928163">
    <property type="protein sequence ID" value="CAR14869.1"/>
    <property type="molecule type" value="Genomic_DNA"/>
</dbReference>
<dbReference type="RefSeq" id="WP_000854035.1">
    <property type="nucleotide sequence ID" value="NC_011751.1"/>
</dbReference>
<dbReference type="RefSeq" id="YP_002414374.1">
    <property type="nucleotide sequence ID" value="NC_011751.1"/>
</dbReference>
<dbReference type="SMR" id="B7NDL9"/>
<dbReference type="STRING" id="585056.ECUMN_3715"/>
<dbReference type="KEGG" id="eum:ECUMN_3715"/>
<dbReference type="PATRIC" id="fig|585056.7.peg.3898"/>
<dbReference type="HOGENOM" id="CLU_018816_15_2_6"/>
<dbReference type="Proteomes" id="UP000007097">
    <property type="component" value="Chromosome"/>
</dbReference>
<dbReference type="GO" id="GO:0005886">
    <property type="term" value="C:plasma membrane"/>
    <property type="evidence" value="ECO:0007669"/>
    <property type="project" value="UniProtKB-SubCell"/>
</dbReference>
<dbReference type="GO" id="GO:0022857">
    <property type="term" value="F:transmembrane transporter activity"/>
    <property type="evidence" value="ECO:0007669"/>
    <property type="project" value="UniProtKB-UniRule"/>
</dbReference>
<dbReference type="FunFam" id="2.40.30.170:FF:000002">
    <property type="entry name" value="p-hydroxybenzoic acid efflux pump subunit AaeA"/>
    <property type="match status" value="1"/>
</dbReference>
<dbReference type="FunFam" id="2.40.50.100:FF:000018">
    <property type="entry name" value="p-hydroxybenzoic acid efflux pump subunit AaeA"/>
    <property type="match status" value="1"/>
</dbReference>
<dbReference type="Gene3D" id="2.40.30.170">
    <property type="match status" value="1"/>
</dbReference>
<dbReference type="Gene3D" id="2.40.50.100">
    <property type="match status" value="1"/>
</dbReference>
<dbReference type="HAMAP" id="MF_01544">
    <property type="entry name" value="AaeA"/>
    <property type="match status" value="1"/>
</dbReference>
<dbReference type="InterPro" id="IPR043602">
    <property type="entry name" value="CusB-like_dom_1"/>
</dbReference>
<dbReference type="InterPro" id="IPR032317">
    <property type="entry name" value="CusB_D23"/>
</dbReference>
<dbReference type="InterPro" id="IPR050393">
    <property type="entry name" value="MFP_Efflux_Pump"/>
</dbReference>
<dbReference type="InterPro" id="IPR022871">
    <property type="entry name" value="PHBA_efflux_pump_AaeA"/>
</dbReference>
<dbReference type="InterPro" id="IPR006143">
    <property type="entry name" value="RND_pump_MFP"/>
</dbReference>
<dbReference type="NCBIfam" id="NF007850">
    <property type="entry name" value="PRK10559.1"/>
    <property type="match status" value="1"/>
</dbReference>
<dbReference type="NCBIfam" id="TIGR01730">
    <property type="entry name" value="RND_mfp"/>
    <property type="match status" value="1"/>
</dbReference>
<dbReference type="PANTHER" id="PTHR30367:SF12">
    <property type="entry name" value="P-HYDROXYBENZOIC ACID EFFLUX PUMP SUBUNIT AAEA"/>
    <property type="match status" value="1"/>
</dbReference>
<dbReference type="PANTHER" id="PTHR30367">
    <property type="entry name" value="P-HYDROXYBENZOIC ACID EFFLUX PUMP SUBUNIT AAEA-RELATED"/>
    <property type="match status" value="1"/>
</dbReference>
<dbReference type="Pfam" id="PF00529">
    <property type="entry name" value="CusB_dom_1"/>
    <property type="match status" value="1"/>
</dbReference>
<dbReference type="Pfam" id="PF16576">
    <property type="entry name" value="HlyD_D23"/>
    <property type="match status" value="1"/>
</dbReference>
<dbReference type="SUPFAM" id="SSF111369">
    <property type="entry name" value="HlyD-like secretion proteins"/>
    <property type="match status" value="1"/>
</dbReference>